<feature type="chain" id="PRO_0000266198" description="CTP synthase">
    <location>
        <begin position="1"/>
        <end position="543"/>
    </location>
</feature>
<feature type="domain" description="Glutamine amidotransferase type-1" evidence="1">
    <location>
        <begin position="291"/>
        <end position="542"/>
    </location>
</feature>
<feature type="region of interest" description="Amidoligase domain" evidence="1">
    <location>
        <begin position="1"/>
        <end position="265"/>
    </location>
</feature>
<feature type="active site" description="Nucleophile; for glutamine hydrolysis" evidence="1">
    <location>
        <position position="380"/>
    </location>
</feature>
<feature type="active site" evidence="1">
    <location>
        <position position="515"/>
    </location>
</feature>
<feature type="active site" evidence="1">
    <location>
        <position position="517"/>
    </location>
</feature>
<feature type="binding site" evidence="1">
    <location>
        <position position="13"/>
    </location>
    <ligand>
        <name>CTP</name>
        <dbReference type="ChEBI" id="CHEBI:37563"/>
        <note>allosteric inhibitor</note>
    </ligand>
</feature>
<feature type="binding site" evidence="1">
    <location>
        <position position="13"/>
    </location>
    <ligand>
        <name>UTP</name>
        <dbReference type="ChEBI" id="CHEBI:46398"/>
    </ligand>
</feature>
<feature type="binding site" evidence="1">
    <location>
        <begin position="14"/>
        <end position="19"/>
    </location>
    <ligand>
        <name>ATP</name>
        <dbReference type="ChEBI" id="CHEBI:30616"/>
    </ligand>
</feature>
<feature type="binding site" evidence="1">
    <location>
        <position position="54"/>
    </location>
    <ligand>
        <name>L-glutamine</name>
        <dbReference type="ChEBI" id="CHEBI:58359"/>
    </ligand>
</feature>
<feature type="binding site" evidence="1">
    <location>
        <position position="71"/>
    </location>
    <ligand>
        <name>ATP</name>
        <dbReference type="ChEBI" id="CHEBI:30616"/>
    </ligand>
</feature>
<feature type="binding site" evidence="1">
    <location>
        <position position="71"/>
    </location>
    <ligand>
        <name>Mg(2+)</name>
        <dbReference type="ChEBI" id="CHEBI:18420"/>
    </ligand>
</feature>
<feature type="binding site" evidence="1">
    <location>
        <position position="139"/>
    </location>
    <ligand>
        <name>Mg(2+)</name>
        <dbReference type="ChEBI" id="CHEBI:18420"/>
    </ligand>
</feature>
<feature type="binding site" evidence="1">
    <location>
        <begin position="146"/>
        <end position="148"/>
    </location>
    <ligand>
        <name>CTP</name>
        <dbReference type="ChEBI" id="CHEBI:37563"/>
        <note>allosteric inhibitor</note>
    </ligand>
</feature>
<feature type="binding site" evidence="1">
    <location>
        <begin position="186"/>
        <end position="191"/>
    </location>
    <ligand>
        <name>CTP</name>
        <dbReference type="ChEBI" id="CHEBI:37563"/>
        <note>allosteric inhibitor</note>
    </ligand>
</feature>
<feature type="binding site" evidence="1">
    <location>
        <begin position="186"/>
        <end position="191"/>
    </location>
    <ligand>
        <name>UTP</name>
        <dbReference type="ChEBI" id="CHEBI:46398"/>
    </ligand>
</feature>
<feature type="binding site" evidence="1">
    <location>
        <position position="222"/>
    </location>
    <ligand>
        <name>CTP</name>
        <dbReference type="ChEBI" id="CHEBI:37563"/>
        <note>allosteric inhibitor</note>
    </ligand>
</feature>
<feature type="binding site" evidence="1">
    <location>
        <position position="222"/>
    </location>
    <ligand>
        <name>UTP</name>
        <dbReference type="ChEBI" id="CHEBI:46398"/>
    </ligand>
</feature>
<feature type="binding site" evidence="1">
    <location>
        <begin position="238"/>
        <end position="240"/>
    </location>
    <ligand>
        <name>ATP</name>
        <dbReference type="ChEBI" id="CHEBI:30616"/>
    </ligand>
</feature>
<feature type="binding site" evidence="1">
    <location>
        <position position="353"/>
    </location>
    <ligand>
        <name>L-glutamine</name>
        <dbReference type="ChEBI" id="CHEBI:58359"/>
    </ligand>
</feature>
<feature type="binding site" evidence="1">
    <location>
        <begin position="381"/>
        <end position="384"/>
    </location>
    <ligand>
        <name>L-glutamine</name>
        <dbReference type="ChEBI" id="CHEBI:58359"/>
    </ligand>
</feature>
<feature type="binding site" evidence="1">
    <location>
        <position position="404"/>
    </location>
    <ligand>
        <name>L-glutamine</name>
        <dbReference type="ChEBI" id="CHEBI:58359"/>
    </ligand>
</feature>
<feature type="binding site" evidence="1">
    <location>
        <position position="470"/>
    </location>
    <ligand>
        <name>L-glutamine</name>
        <dbReference type="ChEBI" id="CHEBI:58359"/>
    </ligand>
</feature>
<organism>
    <name type="scientific">Rhodopseudomonas palustris (strain ATCC BAA-98 / CGA009)</name>
    <dbReference type="NCBI Taxonomy" id="258594"/>
    <lineage>
        <taxon>Bacteria</taxon>
        <taxon>Pseudomonadati</taxon>
        <taxon>Pseudomonadota</taxon>
        <taxon>Alphaproteobacteria</taxon>
        <taxon>Hyphomicrobiales</taxon>
        <taxon>Nitrobacteraceae</taxon>
        <taxon>Rhodopseudomonas</taxon>
    </lineage>
</organism>
<reference key="1">
    <citation type="journal article" date="2004" name="Nat. Biotechnol.">
        <title>Complete genome sequence of the metabolically versatile photosynthetic bacterium Rhodopseudomonas palustris.</title>
        <authorList>
            <person name="Larimer F.W."/>
            <person name="Chain P."/>
            <person name="Hauser L."/>
            <person name="Lamerdin J.E."/>
            <person name="Malfatti S."/>
            <person name="Do L."/>
            <person name="Land M.L."/>
            <person name="Pelletier D.A."/>
            <person name="Beatty J.T."/>
            <person name="Lang A.S."/>
            <person name="Tabita F.R."/>
            <person name="Gibson J.L."/>
            <person name="Hanson T.E."/>
            <person name="Bobst C."/>
            <person name="Torres y Torres J.L."/>
            <person name="Peres C."/>
            <person name="Harrison F.H."/>
            <person name="Gibson J."/>
            <person name="Harwood C.S."/>
        </authorList>
    </citation>
    <scope>NUCLEOTIDE SEQUENCE [LARGE SCALE GENOMIC DNA]</scope>
    <source>
        <strain>ATCC BAA-98 / CGA009</strain>
    </source>
</reference>
<accession>Q6N5T4</accession>
<comment type="function">
    <text evidence="1">Catalyzes the ATP-dependent amination of UTP to CTP with either L-glutamine or ammonia as the source of nitrogen. Regulates intracellular CTP levels through interactions with the four ribonucleotide triphosphates.</text>
</comment>
<comment type="catalytic activity">
    <reaction evidence="1">
        <text>UTP + L-glutamine + ATP + H2O = CTP + L-glutamate + ADP + phosphate + 2 H(+)</text>
        <dbReference type="Rhea" id="RHEA:26426"/>
        <dbReference type="ChEBI" id="CHEBI:15377"/>
        <dbReference type="ChEBI" id="CHEBI:15378"/>
        <dbReference type="ChEBI" id="CHEBI:29985"/>
        <dbReference type="ChEBI" id="CHEBI:30616"/>
        <dbReference type="ChEBI" id="CHEBI:37563"/>
        <dbReference type="ChEBI" id="CHEBI:43474"/>
        <dbReference type="ChEBI" id="CHEBI:46398"/>
        <dbReference type="ChEBI" id="CHEBI:58359"/>
        <dbReference type="ChEBI" id="CHEBI:456216"/>
        <dbReference type="EC" id="6.3.4.2"/>
    </reaction>
</comment>
<comment type="catalytic activity">
    <reaction evidence="1">
        <text>L-glutamine + H2O = L-glutamate + NH4(+)</text>
        <dbReference type="Rhea" id="RHEA:15889"/>
        <dbReference type="ChEBI" id="CHEBI:15377"/>
        <dbReference type="ChEBI" id="CHEBI:28938"/>
        <dbReference type="ChEBI" id="CHEBI:29985"/>
        <dbReference type="ChEBI" id="CHEBI:58359"/>
    </reaction>
</comment>
<comment type="catalytic activity">
    <reaction evidence="1">
        <text>UTP + NH4(+) + ATP = CTP + ADP + phosphate + 2 H(+)</text>
        <dbReference type="Rhea" id="RHEA:16597"/>
        <dbReference type="ChEBI" id="CHEBI:15378"/>
        <dbReference type="ChEBI" id="CHEBI:28938"/>
        <dbReference type="ChEBI" id="CHEBI:30616"/>
        <dbReference type="ChEBI" id="CHEBI:37563"/>
        <dbReference type="ChEBI" id="CHEBI:43474"/>
        <dbReference type="ChEBI" id="CHEBI:46398"/>
        <dbReference type="ChEBI" id="CHEBI:456216"/>
    </reaction>
</comment>
<comment type="activity regulation">
    <text evidence="1">Allosterically activated by GTP, when glutamine is the substrate; GTP has no effect on the reaction when ammonia is the substrate. The allosteric effector GTP functions by stabilizing the protein conformation that binds the tetrahedral intermediate(s) formed during glutamine hydrolysis. Inhibited by the product CTP, via allosteric rather than competitive inhibition.</text>
</comment>
<comment type="pathway">
    <text evidence="1">Pyrimidine metabolism; CTP biosynthesis via de novo pathway; CTP from UDP: step 2/2.</text>
</comment>
<comment type="subunit">
    <text evidence="1">Homotetramer.</text>
</comment>
<comment type="miscellaneous">
    <text evidence="1">CTPSs have evolved a hybrid strategy for distinguishing between UTP and CTP. The overlapping regions of the product feedback inhibitory and substrate sites recognize a common feature in both compounds, the triphosphate moiety. To differentiate isosteric substrate and product pyrimidine rings, an additional pocket far from the expected kinase/ligase catalytic site, specifically recognizes the cytosine and ribose portions of the product inhibitor.</text>
</comment>
<comment type="similarity">
    <text evidence="1">Belongs to the CTP synthase family.</text>
</comment>
<protein>
    <recommendedName>
        <fullName evidence="1">CTP synthase</fullName>
        <ecNumber evidence="1">6.3.4.2</ecNumber>
    </recommendedName>
    <alternativeName>
        <fullName evidence="1">Cytidine 5'-triphosphate synthase</fullName>
    </alternativeName>
    <alternativeName>
        <fullName evidence="1">Cytidine triphosphate synthetase</fullName>
        <shortName evidence="1">CTP synthetase</shortName>
        <shortName evidence="1">CTPS</shortName>
    </alternativeName>
    <alternativeName>
        <fullName evidence="1">UTP--ammonia ligase</fullName>
    </alternativeName>
</protein>
<name>PYRG_RHOPA</name>
<sequence>MARYIFITGGVVSSLGKGLASAALGALLQARGYKVRLRKLDPYLNLDPGTMSPYQHGEVFVTDDGAETDLDLGHYERFTGRPATKQDNITTGRIYQDILTKERRGDYLGATIQVVPHVTNAIKEFIVSDNDGYDFVLVEIGGTVGDIEGLPFFEAIRQIKNDLPRGDVIYIHLTLLPYIPSAGELKTKPTQHSVKELRSIGIQPDILLCRTDRPIPKEERRKLGLFCNVRESAVIEARDADSIYAVPEAYHAAGLDDEVLAAFAIAAKEPPQLGRWHEINERIRNPEGAVTIAIVGKYTGMKDAYKSLIEALSHGGIANKVQVKLDWIESEVFENEDPAPFLEHVNGILVPGGFGQRGAEGKIEAARFARERNVPYFGICFGMQMAVIEAARNLAGIEQANSTEFGPTPEPLVGLMTEWVRGNELEKRSQAGDLGGTMRLGAYPATLKRGSRVSQVYGGVTEISERHRHRYEVNTAYKDRLEQHGLKFSGMSPDGVLPEIVEYEDHPWFIGVQFHPELKSRPFDPHPLFASFVQAALVQSRLV</sequence>
<dbReference type="EC" id="6.3.4.2" evidence="1"/>
<dbReference type="EMBL" id="BX572602">
    <property type="protein sequence ID" value="CAE28327.1"/>
    <property type="molecule type" value="Genomic_DNA"/>
</dbReference>
<dbReference type="RefSeq" id="WP_011158435.1">
    <property type="nucleotide sequence ID" value="NZ_CP116810.1"/>
</dbReference>
<dbReference type="SMR" id="Q6N5T4"/>
<dbReference type="STRING" id="258594.RPA2886"/>
<dbReference type="GeneID" id="66893968"/>
<dbReference type="eggNOG" id="COG0504">
    <property type="taxonomic scope" value="Bacteria"/>
</dbReference>
<dbReference type="HOGENOM" id="CLU_011675_5_0_5"/>
<dbReference type="PhylomeDB" id="Q6N5T4"/>
<dbReference type="UniPathway" id="UPA00159">
    <property type="reaction ID" value="UER00277"/>
</dbReference>
<dbReference type="GO" id="GO:0005829">
    <property type="term" value="C:cytosol"/>
    <property type="evidence" value="ECO:0007669"/>
    <property type="project" value="TreeGrafter"/>
</dbReference>
<dbReference type="GO" id="GO:0005524">
    <property type="term" value="F:ATP binding"/>
    <property type="evidence" value="ECO:0007669"/>
    <property type="project" value="UniProtKB-KW"/>
</dbReference>
<dbReference type="GO" id="GO:0003883">
    <property type="term" value="F:CTP synthase activity"/>
    <property type="evidence" value="ECO:0007669"/>
    <property type="project" value="UniProtKB-UniRule"/>
</dbReference>
<dbReference type="GO" id="GO:0004359">
    <property type="term" value="F:glutaminase activity"/>
    <property type="evidence" value="ECO:0007669"/>
    <property type="project" value="RHEA"/>
</dbReference>
<dbReference type="GO" id="GO:0042802">
    <property type="term" value="F:identical protein binding"/>
    <property type="evidence" value="ECO:0007669"/>
    <property type="project" value="TreeGrafter"/>
</dbReference>
<dbReference type="GO" id="GO:0046872">
    <property type="term" value="F:metal ion binding"/>
    <property type="evidence" value="ECO:0007669"/>
    <property type="project" value="UniProtKB-KW"/>
</dbReference>
<dbReference type="GO" id="GO:0044210">
    <property type="term" value="P:'de novo' CTP biosynthetic process"/>
    <property type="evidence" value="ECO:0007669"/>
    <property type="project" value="UniProtKB-UniRule"/>
</dbReference>
<dbReference type="GO" id="GO:0019856">
    <property type="term" value="P:pyrimidine nucleobase biosynthetic process"/>
    <property type="evidence" value="ECO:0007669"/>
    <property type="project" value="TreeGrafter"/>
</dbReference>
<dbReference type="CDD" id="cd03113">
    <property type="entry name" value="CTPS_N"/>
    <property type="match status" value="1"/>
</dbReference>
<dbReference type="CDD" id="cd01746">
    <property type="entry name" value="GATase1_CTP_Synthase"/>
    <property type="match status" value="1"/>
</dbReference>
<dbReference type="FunFam" id="3.40.50.300:FF:000009">
    <property type="entry name" value="CTP synthase"/>
    <property type="match status" value="1"/>
</dbReference>
<dbReference type="FunFam" id="3.40.50.880:FF:000002">
    <property type="entry name" value="CTP synthase"/>
    <property type="match status" value="1"/>
</dbReference>
<dbReference type="Gene3D" id="3.40.50.880">
    <property type="match status" value="1"/>
</dbReference>
<dbReference type="Gene3D" id="3.40.50.300">
    <property type="entry name" value="P-loop containing nucleotide triphosphate hydrolases"/>
    <property type="match status" value="1"/>
</dbReference>
<dbReference type="HAMAP" id="MF_01227">
    <property type="entry name" value="PyrG"/>
    <property type="match status" value="1"/>
</dbReference>
<dbReference type="InterPro" id="IPR029062">
    <property type="entry name" value="Class_I_gatase-like"/>
</dbReference>
<dbReference type="InterPro" id="IPR004468">
    <property type="entry name" value="CTP_synthase"/>
</dbReference>
<dbReference type="InterPro" id="IPR017456">
    <property type="entry name" value="CTP_synthase_N"/>
</dbReference>
<dbReference type="InterPro" id="IPR017926">
    <property type="entry name" value="GATASE"/>
</dbReference>
<dbReference type="InterPro" id="IPR033828">
    <property type="entry name" value="GATase1_CTP_Synthase"/>
</dbReference>
<dbReference type="InterPro" id="IPR027417">
    <property type="entry name" value="P-loop_NTPase"/>
</dbReference>
<dbReference type="NCBIfam" id="NF003792">
    <property type="entry name" value="PRK05380.1"/>
    <property type="match status" value="1"/>
</dbReference>
<dbReference type="NCBIfam" id="TIGR00337">
    <property type="entry name" value="PyrG"/>
    <property type="match status" value="1"/>
</dbReference>
<dbReference type="PANTHER" id="PTHR11550">
    <property type="entry name" value="CTP SYNTHASE"/>
    <property type="match status" value="1"/>
</dbReference>
<dbReference type="PANTHER" id="PTHR11550:SF0">
    <property type="entry name" value="CTP SYNTHASE-RELATED"/>
    <property type="match status" value="1"/>
</dbReference>
<dbReference type="Pfam" id="PF06418">
    <property type="entry name" value="CTP_synth_N"/>
    <property type="match status" value="1"/>
</dbReference>
<dbReference type="Pfam" id="PF00117">
    <property type="entry name" value="GATase"/>
    <property type="match status" value="1"/>
</dbReference>
<dbReference type="SUPFAM" id="SSF52317">
    <property type="entry name" value="Class I glutamine amidotransferase-like"/>
    <property type="match status" value="1"/>
</dbReference>
<dbReference type="SUPFAM" id="SSF52540">
    <property type="entry name" value="P-loop containing nucleoside triphosphate hydrolases"/>
    <property type="match status" value="1"/>
</dbReference>
<dbReference type="PROSITE" id="PS51273">
    <property type="entry name" value="GATASE_TYPE_1"/>
    <property type="match status" value="1"/>
</dbReference>
<gene>
    <name evidence="1" type="primary">pyrG</name>
    <name type="ordered locus">RPA2886</name>
</gene>
<proteinExistence type="inferred from homology"/>
<evidence type="ECO:0000255" key="1">
    <source>
        <dbReference type="HAMAP-Rule" id="MF_01227"/>
    </source>
</evidence>
<keyword id="KW-0067">ATP-binding</keyword>
<keyword id="KW-0315">Glutamine amidotransferase</keyword>
<keyword id="KW-0436">Ligase</keyword>
<keyword id="KW-0460">Magnesium</keyword>
<keyword id="KW-0479">Metal-binding</keyword>
<keyword id="KW-0547">Nucleotide-binding</keyword>
<keyword id="KW-0665">Pyrimidine biosynthesis</keyword>